<proteinExistence type="inferred from homology"/>
<keyword id="KW-0997">Cell inner membrane</keyword>
<keyword id="KW-1003">Cell membrane</keyword>
<keyword id="KW-0472">Membrane</keyword>
<keyword id="KW-0592">Phosphate transport</keyword>
<keyword id="KW-1185">Reference proteome</keyword>
<keyword id="KW-0812">Transmembrane</keyword>
<keyword id="KW-1133">Transmembrane helix</keyword>
<keyword id="KW-0813">Transport</keyword>
<organism>
    <name type="scientific">Haemophilus influenzae (strain ATCC 51907 / DSM 11121 / KW20 / Rd)</name>
    <dbReference type="NCBI Taxonomy" id="71421"/>
    <lineage>
        <taxon>Bacteria</taxon>
        <taxon>Pseudomonadati</taxon>
        <taxon>Pseudomonadota</taxon>
        <taxon>Gammaproteobacteria</taxon>
        <taxon>Pasteurellales</taxon>
        <taxon>Pasteurellaceae</taxon>
        <taxon>Haemophilus</taxon>
    </lineage>
</organism>
<gene>
    <name type="primary">pstC</name>
    <name type="ordered locus">HI_1382</name>
</gene>
<comment type="function">
    <text evidence="1">Part of the binding-protein-dependent transport system for phosphate; probably responsible for the translocation of the substrate across the membrane.</text>
</comment>
<comment type="subcellular location">
    <subcellularLocation>
        <location evidence="1">Cell inner membrane</location>
        <topology evidence="3">Multi-pass membrane protein</topology>
    </subcellularLocation>
</comment>
<comment type="similarity">
    <text evidence="4">Belongs to the binding-protein-dependent transport system permease family. CysTW subfamily.</text>
</comment>
<protein>
    <recommendedName>
        <fullName>Phosphate transport system permease protein PstC</fullName>
    </recommendedName>
</protein>
<dbReference type="EMBL" id="L42023">
    <property type="protein sequence ID" value="AAC23027.1"/>
    <property type="molecule type" value="Genomic_DNA"/>
</dbReference>
<dbReference type="PIR" id="H64120">
    <property type="entry name" value="H64120"/>
</dbReference>
<dbReference type="RefSeq" id="NP_439534.1">
    <property type="nucleotide sequence ID" value="NC_000907.1"/>
</dbReference>
<dbReference type="STRING" id="71421.HI_1382"/>
<dbReference type="EnsemblBacteria" id="AAC23027">
    <property type="protein sequence ID" value="AAC23027"/>
    <property type="gene ID" value="HI_1382"/>
</dbReference>
<dbReference type="KEGG" id="hin:HI_1382"/>
<dbReference type="PATRIC" id="fig|71421.8.peg.1438"/>
<dbReference type="eggNOG" id="COG0573">
    <property type="taxonomic scope" value="Bacteria"/>
</dbReference>
<dbReference type="HOGENOM" id="CLU_033621_1_3_6"/>
<dbReference type="OrthoDB" id="9785113at2"/>
<dbReference type="PhylomeDB" id="P45191"/>
<dbReference type="BioCyc" id="HINF71421:G1GJ1-1408-MONOMER"/>
<dbReference type="Proteomes" id="UP000000579">
    <property type="component" value="Chromosome"/>
</dbReference>
<dbReference type="GO" id="GO:0005886">
    <property type="term" value="C:plasma membrane"/>
    <property type="evidence" value="ECO:0000318"/>
    <property type="project" value="GO_Central"/>
</dbReference>
<dbReference type="GO" id="GO:0005315">
    <property type="term" value="F:phosphate transmembrane transporter activity"/>
    <property type="evidence" value="ECO:0007669"/>
    <property type="project" value="InterPro"/>
</dbReference>
<dbReference type="GO" id="GO:0035435">
    <property type="term" value="P:phosphate ion transmembrane transport"/>
    <property type="evidence" value="ECO:0000318"/>
    <property type="project" value="GO_Central"/>
</dbReference>
<dbReference type="CDD" id="cd06261">
    <property type="entry name" value="TM_PBP2"/>
    <property type="match status" value="1"/>
</dbReference>
<dbReference type="Gene3D" id="1.10.3720.10">
    <property type="entry name" value="MetI-like"/>
    <property type="match status" value="1"/>
</dbReference>
<dbReference type="InterPro" id="IPR000515">
    <property type="entry name" value="MetI-like"/>
</dbReference>
<dbReference type="InterPro" id="IPR035906">
    <property type="entry name" value="MetI-like_sf"/>
</dbReference>
<dbReference type="InterPro" id="IPR011864">
    <property type="entry name" value="Phosphate_PstC"/>
</dbReference>
<dbReference type="InterPro" id="IPR051124">
    <property type="entry name" value="Phosphate_Transport_Permease"/>
</dbReference>
<dbReference type="NCBIfam" id="TIGR02138">
    <property type="entry name" value="phosphate_pstC"/>
    <property type="match status" value="1"/>
</dbReference>
<dbReference type="PANTHER" id="PTHR30425">
    <property type="entry name" value="PHOSPHATE TRANSPORT SYSTEM PERMEASE PROTEIN PST"/>
    <property type="match status" value="1"/>
</dbReference>
<dbReference type="PANTHER" id="PTHR30425:SF1">
    <property type="entry name" value="PHOSPHATE TRANSPORT SYSTEM PERMEASE PROTEIN PSTC"/>
    <property type="match status" value="1"/>
</dbReference>
<dbReference type="Pfam" id="PF00528">
    <property type="entry name" value="BPD_transp_1"/>
    <property type="match status" value="1"/>
</dbReference>
<dbReference type="SUPFAM" id="SSF161098">
    <property type="entry name" value="MetI-like"/>
    <property type="match status" value="1"/>
</dbReference>
<dbReference type="PROSITE" id="PS50928">
    <property type="entry name" value="ABC_TM1"/>
    <property type="match status" value="1"/>
</dbReference>
<feature type="chain" id="PRO_0000060209" description="Phosphate transport system permease protein PstC">
    <location>
        <begin position="1"/>
        <end position="315"/>
    </location>
</feature>
<feature type="topological domain" description="Cytoplasmic" evidence="2">
    <location>
        <begin position="1"/>
        <end position="22"/>
    </location>
</feature>
<feature type="transmembrane region" description="Helical" evidence="3">
    <location>
        <begin position="23"/>
        <end position="43"/>
    </location>
</feature>
<feature type="topological domain" description="Periplasmic" evidence="2">
    <location>
        <begin position="44"/>
        <end position="77"/>
    </location>
</feature>
<feature type="transmembrane region" description="Helical" evidence="3">
    <location>
        <begin position="78"/>
        <end position="98"/>
    </location>
</feature>
<feature type="topological domain" description="Cytoplasmic" evidence="2">
    <location>
        <begin position="99"/>
        <end position="117"/>
    </location>
</feature>
<feature type="transmembrane region" description="Helical" evidence="3">
    <location>
        <begin position="118"/>
        <end position="138"/>
    </location>
</feature>
<feature type="topological domain" description="Periplasmic" evidence="2">
    <location>
        <begin position="139"/>
        <end position="164"/>
    </location>
</feature>
<feature type="transmembrane region" description="Helical" evidence="3">
    <location>
        <begin position="165"/>
        <end position="185"/>
    </location>
</feature>
<feature type="topological domain" description="Cytoplasmic" evidence="2">
    <location>
        <begin position="186"/>
        <end position="223"/>
    </location>
</feature>
<feature type="transmembrane region" description="Helical" evidence="3">
    <location>
        <begin position="224"/>
        <end position="244"/>
    </location>
</feature>
<feature type="topological domain" description="Periplasmic" evidence="2">
    <location>
        <begin position="245"/>
        <end position="281"/>
    </location>
</feature>
<feature type="transmembrane region" description="Helical" evidence="3">
    <location>
        <begin position="282"/>
        <end position="302"/>
    </location>
</feature>
<feature type="topological domain" description="Cytoplasmic" evidence="2">
    <location>
        <begin position="303"/>
        <end position="315"/>
    </location>
</feature>
<feature type="domain" description="ABC transmembrane type-1" evidence="3">
    <location>
        <begin position="74"/>
        <end position="302"/>
    </location>
</feature>
<reference key="1">
    <citation type="journal article" date="1995" name="Science">
        <title>Whole-genome random sequencing and assembly of Haemophilus influenzae Rd.</title>
        <authorList>
            <person name="Fleischmann R.D."/>
            <person name="Adams M.D."/>
            <person name="White O."/>
            <person name="Clayton R.A."/>
            <person name="Kirkness E.F."/>
            <person name="Kerlavage A.R."/>
            <person name="Bult C.J."/>
            <person name="Tomb J.-F."/>
            <person name="Dougherty B.A."/>
            <person name="Merrick J.M."/>
            <person name="McKenney K."/>
            <person name="Sutton G.G."/>
            <person name="FitzHugh W."/>
            <person name="Fields C.A."/>
            <person name="Gocayne J.D."/>
            <person name="Scott J.D."/>
            <person name="Shirley R."/>
            <person name="Liu L.-I."/>
            <person name="Glodek A."/>
            <person name="Kelley J.M."/>
            <person name="Weidman J.F."/>
            <person name="Phillips C.A."/>
            <person name="Spriggs T."/>
            <person name="Hedblom E."/>
            <person name="Cotton M.D."/>
            <person name="Utterback T.R."/>
            <person name="Hanna M.C."/>
            <person name="Nguyen D.T."/>
            <person name="Saudek D.M."/>
            <person name="Brandon R.C."/>
            <person name="Fine L.D."/>
            <person name="Fritchman J.L."/>
            <person name="Fuhrmann J.L."/>
            <person name="Geoghagen N.S.M."/>
            <person name="Gnehm C.L."/>
            <person name="McDonald L.A."/>
            <person name="Small K.V."/>
            <person name="Fraser C.M."/>
            <person name="Smith H.O."/>
            <person name="Venter J.C."/>
        </authorList>
    </citation>
    <scope>NUCLEOTIDE SEQUENCE [LARGE SCALE GENOMIC DNA]</scope>
    <source>
        <strain>ATCC 51907 / DSM 11121 / KW20 / Rd</strain>
    </source>
</reference>
<name>PSTC_HAEIN</name>
<accession>P45191</accession>
<evidence type="ECO:0000250" key="1"/>
<evidence type="ECO:0000255" key="2"/>
<evidence type="ECO:0000255" key="3">
    <source>
        <dbReference type="PROSITE-ProRule" id="PRU00441"/>
    </source>
</evidence>
<evidence type="ECO:0000305" key="4"/>
<sequence length="315" mass="34343">MLTKSRKYFNQTWIESLFKQTTALFALLVFILLAAILISLVIGSWESIKRFGGSFLLETYWDPVQEQYGAIIPILGTLITAGIALFIAVPISFGIAIFLTELAPNWLKRPISIAIEMLAAIPSIIYGMWGLFVFVPLFQEHIQPVLIDNLGNLPGLELFFSGVPFGVGLFTAGLVLAIMIIPFIASVMRDVFSIVPPMLKEGAYGLGATTWEVVRQVIVPHTRIGLVGSVMLGLGRALGETMAITFIIGNSFQLPNSLFSPSTSIASAIANEFNEAGGLQKSALMELGLLLFVITTMVLILSRLMITKMQQTKGK</sequence>